<accession>Q8FKI9</accession>
<dbReference type="EC" id="1.1.99.1" evidence="2"/>
<dbReference type="EC" id="1.2.1.8" evidence="2"/>
<dbReference type="EMBL" id="AE014075">
    <property type="protein sequence ID" value="AAN78912.1"/>
    <property type="status" value="ALT_INIT"/>
    <property type="molecule type" value="Genomic_DNA"/>
</dbReference>
<dbReference type="RefSeq" id="WP_001159142.1">
    <property type="nucleotide sequence ID" value="NZ_CP051263.1"/>
</dbReference>
<dbReference type="SMR" id="Q8FKI9"/>
<dbReference type="STRING" id="199310.c0431"/>
<dbReference type="KEGG" id="ecc:c0431"/>
<dbReference type="eggNOG" id="COG2303">
    <property type="taxonomic scope" value="Bacteria"/>
</dbReference>
<dbReference type="HOGENOM" id="CLU_002865_7_1_6"/>
<dbReference type="UniPathway" id="UPA00529">
    <property type="reaction ID" value="UER00385"/>
</dbReference>
<dbReference type="Proteomes" id="UP000001410">
    <property type="component" value="Chromosome"/>
</dbReference>
<dbReference type="GO" id="GO:0005886">
    <property type="term" value="C:plasma membrane"/>
    <property type="evidence" value="ECO:0007669"/>
    <property type="project" value="UniProtKB-SubCell"/>
</dbReference>
<dbReference type="GO" id="GO:0008802">
    <property type="term" value="F:betaine-aldehyde dehydrogenase (NAD+) activity"/>
    <property type="evidence" value="ECO:0007669"/>
    <property type="project" value="UniProtKB-EC"/>
</dbReference>
<dbReference type="GO" id="GO:0008812">
    <property type="term" value="F:choline dehydrogenase activity"/>
    <property type="evidence" value="ECO:0007669"/>
    <property type="project" value="UniProtKB-UniRule"/>
</dbReference>
<dbReference type="GO" id="GO:0050660">
    <property type="term" value="F:flavin adenine dinucleotide binding"/>
    <property type="evidence" value="ECO:0007669"/>
    <property type="project" value="InterPro"/>
</dbReference>
<dbReference type="GO" id="GO:0019285">
    <property type="term" value="P:glycine betaine biosynthetic process from choline"/>
    <property type="evidence" value="ECO:0007669"/>
    <property type="project" value="UniProtKB-UniRule"/>
</dbReference>
<dbReference type="Gene3D" id="3.50.50.60">
    <property type="entry name" value="FAD/NAD(P)-binding domain"/>
    <property type="match status" value="1"/>
</dbReference>
<dbReference type="Gene3D" id="3.30.560.10">
    <property type="entry name" value="Glucose Oxidase, domain 3"/>
    <property type="match status" value="1"/>
</dbReference>
<dbReference type="HAMAP" id="MF_00750">
    <property type="entry name" value="Choline_dehydrogen"/>
    <property type="match status" value="1"/>
</dbReference>
<dbReference type="InterPro" id="IPR011533">
    <property type="entry name" value="BetA"/>
</dbReference>
<dbReference type="InterPro" id="IPR036188">
    <property type="entry name" value="FAD/NAD-bd_sf"/>
</dbReference>
<dbReference type="InterPro" id="IPR012132">
    <property type="entry name" value="GMC_OxRdtase"/>
</dbReference>
<dbReference type="InterPro" id="IPR000172">
    <property type="entry name" value="GMC_OxRdtase_N"/>
</dbReference>
<dbReference type="InterPro" id="IPR007867">
    <property type="entry name" value="GMC_OxRtase_C"/>
</dbReference>
<dbReference type="NCBIfam" id="TIGR01810">
    <property type="entry name" value="betA"/>
    <property type="match status" value="1"/>
</dbReference>
<dbReference type="NCBIfam" id="NF002550">
    <property type="entry name" value="PRK02106.1"/>
    <property type="match status" value="1"/>
</dbReference>
<dbReference type="PANTHER" id="PTHR11552:SF147">
    <property type="entry name" value="CHOLINE DEHYDROGENASE, MITOCHONDRIAL"/>
    <property type="match status" value="1"/>
</dbReference>
<dbReference type="PANTHER" id="PTHR11552">
    <property type="entry name" value="GLUCOSE-METHANOL-CHOLINE GMC OXIDOREDUCTASE"/>
    <property type="match status" value="1"/>
</dbReference>
<dbReference type="Pfam" id="PF05199">
    <property type="entry name" value="GMC_oxred_C"/>
    <property type="match status" value="1"/>
</dbReference>
<dbReference type="Pfam" id="PF00732">
    <property type="entry name" value="GMC_oxred_N"/>
    <property type="match status" value="1"/>
</dbReference>
<dbReference type="PIRSF" id="PIRSF000137">
    <property type="entry name" value="Alcohol_oxidase"/>
    <property type="match status" value="1"/>
</dbReference>
<dbReference type="SUPFAM" id="SSF54373">
    <property type="entry name" value="FAD-linked reductases, C-terminal domain"/>
    <property type="match status" value="1"/>
</dbReference>
<dbReference type="SUPFAM" id="SSF51905">
    <property type="entry name" value="FAD/NAD(P)-binding domain"/>
    <property type="match status" value="1"/>
</dbReference>
<dbReference type="PROSITE" id="PS00623">
    <property type="entry name" value="GMC_OXRED_1"/>
    <property type="match status" value="1"/>
</dbReference>
<dbReference type="PROSITE" id="PS00624">
    <property type="entry name" value="GMC_OXRED_2"/>
    <property type="match status" value="1"/>
</dbReference>
<sequence length="556" mass="61899">MQFDYIIIGAGSAGNVLATRLTEDPNTTVLLLEAGGPDYRFDFRTQMPAALAFPLQGKRYNWAYETEPEPFMNNRRMECGRGKGLGGSSLINGMCYIRGNALDLDNWAQEPSLENWSYLDCLPYYRKAETRDVGENDYHGGDGPVSVTTSKPGVNPLFEAMIEAGMQAGYPRTDDLNGYQQEGFGPMDRTVTPHGRRASTARGYLDQAKSRPNLTIRTHAMTDHIIFDGKRAVGVEWLEGDSTIPTRAAANKEVLLCAGAIASPQILQRSGVGNAELLAEFDIPLVHELPGVGENLQDHLEMYLQYECKEPVSLYPALQWWNQPRIGAEWLFGGTGVGASNHFEAGGFIRSREEFAWPNIQYHFLPVAINYNGSNAVKEHGFQCHVGSMRSPSRGHVRIKSRDPHQHPGILFNYMSHEQDWQEFRDAIRITREIMHQPALDQYRGREISPGVECQTDEQLDEFVRNHAETAFHPCGTCKMGYDEMAVVDGEGRVHGLEGLRVVDASIMPQIITGNLNATTIMIGEKIADMIRGKEALPRSTAGYFVANGMPVRAKK</sequence>
<name>BETA_ECOL6</name>
<feature type="chain" id="PRO_0000205588" description="Oxygen-dependent choline dehydrogenase">
    <location>
        <begin position="1"/>
        <end position="556"/>
    </location>
</feature>
<feature type="active site" description="Proton acceptor" evidence="2">
    <location>
        <position position="473"/>
    </location>
</feature>
<feature type="binding site" evidence="2">
    <location>
        <begin position="4"/>
        <end position="33"/>
    </location>
    <ligand>
        <name>FAD</name>
        <dbReference type="ChEBI" id="CHEBI:57692"/>
    </ligand>
</feature>
<keyword id="KW-1003">Cell membrane</keyword>
<keyword id="KW-0274">FAD</keyword>
<keyword id="KW-0285">Flavoprotein</keyword>
<keyword id="KW-0472">Membrane</keyword>
<keyword id="KW-0520">NAD</keyword>
<keyword id="KW-0560">Oxidoreductase</keyword>
<keyword id="KW-1185">Reference proteome</keyword>
<organism>
    <name type="scientific">Escherichia coli O6:H1 (strain CFT073 / ATCC 700928 / UPEC)</name>
    <dbReference type="NCBI Taxonomy" id="199310"/>
    <lineage>
        <taxon>Bacteria</taxon>
        <taxon>Pseudomonadati</taxon>
        <taxon>Pseudomonadota</taxon>
        <taxon>Gammaproteobacteria</taxon>
        <taxon>Enterobacterales</taxon>
        <taxon>Enterobacteriaceae</taxon>
        <taxon>Escherichia</taxon>
    </lineage>
</organism>
<reference key="1">
    <citation type="journal article" date="2002" name="Proc. Natl. Acad. Sci. U.S.A.">
        <title>Extensive mosaic structure revealed by the complete genome sequence of uropathogenic Escherichia coli.</title>
        <authorList>
            <person name="Welch R.A."/>
            <person name="Burland V."/>
            <person name="Plunkett G. III"/>
            <person name="Redford P."/>
            <person name="Roesch P."/>
            <person name="Rasko D."/>
            <person name="Buckles E.L."/>
            <person name="Liou S.-R."/>
            <person name="Boutin A."/>
            <person name="Hackett J."/>
            <person name="Stroud D."/>
            <person name="Mayhew G.F."/>
            <person name="Rose D.J."/>
            <person name="Zhou S."/>
            <person name="Schwartz D.C."/>
            <person name="Perna N.T."/>
            <person name="Mobley H.L.T."/>
            <person name="Donnenberg M.S."/>
            <person name="Blattner F.R."/>
        </authorList>
    </citation>
    <scope>NUCLEOTIDE SEQUENCE [LARGE SCALE GENOMIC DNA]</scope>
    <source>
        <strain>CFT073 / ATCC 700928 / UPEC</strain>
    </source>
</reference>
<gene>
    <name evidence="2" type="primary">betA</name>
    <name type="ordered locus">c0431</name>
</gene>
<evidence type="ECO:0000250" key="1"/>
<evidence type="ECO:0000255" key="2">
    <source>
        <dbReference type="HAMAP-Rule" id="MF_00750"/>
    </source>
</evidence>
<evidence type="ECO:0000305" key="3"/>
<proteinExistence type="inferred from homology"/>
<protein>
    <recommendedName>
        <fullName evidence="2">Oxygen-dependent choline dehydrogenase</fullName>
        <shortName evidence="2">CDH</shortName>
        <shortName evidence="2">CHD</shortName>
        <ecNumber evidence="2">1.1.99.1</ecNumber>
    </recommendedName>
    <alternativeName>
        <fullName evidence="2">Betaine aldehyde dehydrogenase</fullName>
        <shortName evidence="2">BADH</shortName>
        <ecNumber evidence="2">1.2.1.8</ecNumber>
    </alternativeName>
</protein>
<comment type="function">
    <text evidence="2">Involved in the biosynthesis of the osmoprotectant glycine betaine. Catalyzes the oxidation of choline to betaine aldehyde and betaine aldehyde to glycine betaine at the same rate.</text>
</comment>
<comment type="catalytic activity">
    <reaction evidence="2">
        <text>choline + A = betaine aldehyde + AH2</text>
        <dbReference type="Rhea" id="RHEA:17433"/>
        <dbReference type="ChEBI" id="CHEBI:13193"/>
        <dbReference type="ChEBI" id="CHEBI:15354"/>
        <dbReference type="ChEBI" id="CHEBI:15710"/>
        <dbReference type="ChEBI" id="CHEBI:17499"/>
        <dbReference type="EC" id="1.1.99.1"/>
    </reaction>
</comment>
<comment type="catalytic activity">
    <reaction evidence="2">
        <text>betaine aldehyde + NAD(+) + H2O = glycine betaine + NADH + 2 H(+)</text>
        <dbReference type="Rhea" id="RHEA:15305"/>
        <dbReference type="ChEBI" id="CHEBI:15377"/>
        <dbReference type="ChEBI" id="CHEBI:15378"/>
        <dbReference type="ChEBI" id="CHEBI:15710"/>
        <dbReference type="ChEBI" id="CHEBI:17750"/>
        <dbReference type="ChEBI" id="CHEBI:57540"/>
        <dbReference type="ChEBI" id="CHEBI:57945"/>
        <dbReference type="EC" id="1.2.1.8"/>
    </reaction>
</comment>
<comment type="cofactor">
    <cofactor evidence="2">
        <name>FAD</name>
        <dbReference type="ChEBI" id="CHEBI:57692"/>
    </cofactor>
</comment>
<comment type="pathway">
    <text evidence="2">Amine and polyamine biosynthesis; betaine biosynthesis via choline pathway; betaine aldehyde from choline (cytochrome c reductase route): step 1/1.</text>
</comment>
<comment type="subcellular location">
    <subcellularLocation>
        <location evidence="1">Cell membrane</location>
        <topology evidence="1">Peripheral membrane protein</topology>
    </subcellularLocation>
</comment>
<comment type="similarity">
    <text evidence="2">Belongs to the GMC oxidoreductase family.</text>
</comment>
<comment type="sequence caution" evidence="3">
    <conflict type="erroneous initiation">
        <sequence resource="EMBL-CDS" id="AAN78912"/>
    </conflict>
    <text>Extended N-terminus.</text>
</comment>